<sequence length="166" mass="19445">MFPTVTEFMNYGQQTVRAARYIGQGFMITLSHANRLPVTIQYPYEKLITSERFRGRIHFEFDKCIACEVCVRVCPIDLPVVDWKLETDIRKKRLLNYSIDFGICIFCGNCVEYCPTNCLSMTEEYELSTYDRHELNYNQIALGRLPMSIIDDYTIRTILNLPEIKT</sequence>
<name>NDHI_MILQU</name>
<gene>
    <name evidence="1" type="primary">ndhI</name>
</gene>
<comment type="function">
    <text evidence="1">NDH shuttles electrons from NAD(P)H:plastoquinone, via FMN and iron-sulfur (Fe-S) centers, to quinones in the photosynthetic chain and possibly in a chloroplast respiratory chain. The immediate electron acceptor for the enzyme in this species is believed to be plastoquinone. Couples the redox reaction to proton translocation, and thus conserves the redox energy in a proton gradient.</text>
</comment>
<comment type="catalytic activity">
    <reaction evidence="1">
        <text>a plastoquinone + NADH + (n+1) H(+)(in) = a plastoquinol + NAD(+) + n H(+)(out)</text>
        <dbReference type="Rhea" id="RHEA:42608"/>
        <dbReference type="Rhea" id="RHEA-COMP:9561"/>
        <dbReference type="Rhea" id="RHEA-COMP:9562"/>
        <dbReference type="ChEBI" id="CHEBI:15378"/>
        <dbReference type="ChEBI" id="CHEBI:17757"/>
        <dbReference type="ChEBI" id="CHEBI:57540"/>
        <dbReference type="ChEBI" id="CHEBI:57945"/>
        <dbReference type="ChEBI" id="CHEBI:62192"/>
    </reaction>
</comment>
<comment type="catalytic activity">
    <reaction evidence="1">
        <text>a plastoquinone + NADPH + (n+1) H(+)(in) = a plastoquinol + NADP(+) + n H(+)(out)</text>
        <dbReference type="Rhea" id="RHEA:42612"/>
        <dbReference type="Rhea" id="RHEA-COMP:9561"/>
        <dbReference type="Rhea" id="RHEA-COMP:9562"/>
        <dbReference type="ChEBI" id="CHEBI:15378"/>
        <dbReference type="ChEBI" id="CHEBI:17757"/>
        <dbReference type="ChEBI" id="CHEBI:57783"/>
        <dbReference type="ChEBI" id="CHEBI:58349"/>
        <dbReference type="ChEBI" id="CHEBI:62192"/>
    </reaction>
</comment>
<comment type="cofactor">
    <cofactor evidence="1">
        <name>[4Fe-4S] cluster</name>
        <dbReference type="ChEBI" id="CHEBI:49883"/>
    </cofactor>
    <text evidence="1">Binds 2 [4Fe-4S] clusters per subunit.</text>
</comment>
<comment type="subunit">
    <text evidence="1">NDH is composed of at least 16 different subunits, 5 of which are encoded in the nucleus.</text>
</comment>
<comment type="subcellular location">
    <subcellularLocation>
        <location evidence="1">Plastid</location>
        <location evidence="1">Chloroplast thylakoid membrane</location>
        <topology evidence="1">Peripheral membrane protein</topology>
    </subcellularLocation>
</comment>
<comment type="similarity">
    <text evidence="1">Belongs to the complex I 23 kDa subunit family.</text>
</comment>
<keyword id="KW-0004">4Fe-4S</keyword>
<keyword id="KW-0150">Chloroplast</keyword>
<keyword id="KW-0408">Iron</keyword>
<keyword id="KW-0411">Iron-sulfur</keyword>
<keyword id="KW-0472">Membrane</keyword>
<keyword id="KW-0479">Metal-binding</keyword>
<keyword id="KW-0520">NAD</keyword>
<keyword id="KW-0521">NADP</keyword>
<keyword id="KW-0934">Plastid</keyword>
<keyword id="KW-0618">Plastoquinone</keyword>
<keyword id="KW-0874">Quinone</keyword>
<keyword id="KW-0677">Repeat</keyword>
<keyword id="KW-0793">Thylakoid</keyword>
<keyword id="KW-1278">Translocase</keyword>
<proteinExistence type="inferred from homology"/>
<feature type="chain" id="PRO_0000250817" description="NAD(P)H-quinone oxidoreductase subunit I, chloroplastic">
    <location>
        <begin position="1"/>
        <end position="166"/>
    </location>
</feature>
<feature type="domain" description="4Fe-4S ferredoxin-type 1" evidence="1">
    <location>
        <begin position="55"/>
        <end position="84"/>
    </location>
</feature>
<feature type="domain" description="4Fe-4S ferredoxin-type 2" evidence="1">
    <location>
        <begin position="95"/>
        <end position="124"/>
    </location>
</feature>
<feature type="binding site" evidence="1">
    <location>
        <position position="64"/>
    </location>
    <ligand>
        <name>[4Fe-4S] cluster</name>
        <dbReference type="ChEBI" id="CHEBI:49883"/>
        <label>1</label>
    </ligand>
</feature>
<feature type="binding site" evidence="1">
    <location>
        <position position="67"/>
    </location>
    <ligand>
        <name>[4Fe-4S] cluster</name>
        <dbReference type="ChEBI" id="CHEBI:49883"/>
        <label>1</label>
    </ligand>
</feature>
<feature type="binding site" evidence="1">
    <location>
        <position position="70"/>
    </location>
    <ligand>
        <name>[4Fe-4S] cluster</name>
        <dbReference type="ChEBI" id="CHEBI:49883"/>
        <label>1</label>
    </ligand>
</feature>
<feature type="binding site" evidence="1">
    <location>
        <position position="74"/>
    </location>
    <ligand>
        <name>[4Fe-4S] cluster</name>
        <dbReference type="ChEBI" id="CHEBI:49883"/>
        <label>2</label>
    </ligand>
</feature>
<feature type="binding site" evidence="1">
    <location>
        <position position="104"/>
    </location>
    <ligand>
        <name>[4Fe-4S] cluster</name>
        <dbReference type="ChEBI" id="CHEBI:49883"/>
        <label>2</label>
    </ligand>
</feature>
<feature type="binding site" evidence="1">
    <location>
        <position position="107"/>
    </location>
    <ligand>
        <name>[4Fe-4S] cluster</name>
        <dbReference type="ChEBI" id="CHEBI:49883"/>
        <label>2</label>
    </ligand>
</feature>
<feature type="binding site" evidence="1">
    <location>
        <position position="110"/>
    </location>
    <ligand>
        <name>[4Fe-4S] cluster</name>
        <dbReference type="ChEBI" id="CHEBI:49883"/>
        <label>2</label>
    </ligand>
</feature>
<feature type="binding site" evidence="1">
    <location>
        <position position="114"/>
    </location>
    <ligand>
        <name>[4Fe-4S] cluster</name>
        <dbReference type="ChEBI" id="CHEBI:49883"/>
        <label>1</label>
    </ligand>
</feature>
<protein>
    <recommendedName>
        <fullName evidence="1">NAD(P)H-quinone oxidoreductase subunit I, chloroplastic</fullName>
        <ecNumber evidence="1">7.1.1.-</ecNumber>
    </recommendedName>
    <alternativeName>
        <fullName evidence="1">NAD(P)H dehydrogenase subunit I</fullName>
        <shortName evidence="1">NDH subunit I</shortName>
    </alternativeName>
    <alternativeName>
        <fullName evidence="1">NADH-plastoquinone oxidoreductase subunit I</fullName>
    </alternativeName>
</protein>
<evidence type="ECO:0000255" key="1">
    <source>
        <dbReference type="HAMAP-Rule" id="MF_01351"/>
    </source>
</evidence>
<geneLocation type="chloroplast"/>
<organism>
    <name type="scientific">Milleria quinqueflora</name>
    <name type="common">Cocolmeca</name>
    <dbReference type="NCBI Taxonomy" id="183052"/>
    <lineage>
        <taxon>Eukaryota</taxon>
        <taxon>Viridiplantae</taxon>
        <taxon>Streptophyta</taxon>
        <taxon>Embryophyta</taxon>
        <taxon>Tracheophyta</taxon>
        <taxon>Spermatophyta</taxon>
        <taxon>Magnoliopsida</taxon>
        <taxon>eudicotyledons</taxon>
        <taxon>Gunneridae</taxon>
        <taxon>Pentapetalae</taxon>
        <taxon>asterids</taxon>
        <taxon>campanulids</taxon>
        <taxon>Asterales</taxon>
        <taxon>Asteraceae</taxon>
        <taxon>Asteroideae</taxon>
        <taxon>Heliantheae alliance</taxon>
        <taxon>Millerieae</taxon>
        <taxon>Milleria</taxon>
    </lineage>
</organism>
<dbReference type="EC" id="7.1.1.-" evidence="1"/>
<dbReference type="EMBL" id="AF383819">
    <property type="protein sequence ID" value="AAN61760.1"/>
    <property type="molecule type" value="Genomic_DNA"/>
</dbReference>
<dbReference type="SMR" id="Q8HVP4"/>
<dbReference type="GO" id="GO:0009535">
    <property type="term" value="C:chloroplast thylakoid membrane"/>
    <property type="evidence" value="ECO:0007669"/>
    <property type="project" value="UniProtKB-SubCell"/>
</dbReference>
<dbReference type="GO" id="GO:0051539">
    <property type="term" value="F:4 iron, 4 sulfur cluster binding"/>
    <property type="evidence" value="ECO:0007669"/>
    <property type="project" value="UniProtKB-KW"/>
</dbReference>
<dbReference type="GO" id="GO:0005506">
    <property type="term" value="F:iron ion binding"/>
    <property type="evidence" value="ECO:0007669"/>
    <property type="project" value="UniProtKB-UniRule"/>
</dbReference>
<dbReference type="GO" id="GO:0008137">
    <property type="term" value="F:NADH dehydrogenase (ubiquinone) activity"/>
    <property type="evidence" value="ECO:0007669"/>
    <property type="project" value="InterPro"/>
</dbReference>
<dbReference type="GO" id="GO:0048038">
    <property type="term" value="F:quinone binding"/>
    <property type="evidence" value="ECO:0007669"/>
    <property type="project" value="UniProtKB-KW"/>
</dbReference>
<dbReference type="GO" id="GO:0019684">
    <property type="term" value="P:photosynthesis, light reaction"/>
    <property type="evidence" value="ECO:0007669"/>
    <property type="project" value="UniProtKB-UniRule"/>
</dbReference>
<dbReference type="FunFam" id="3.30.70.3270:FF:000006">
    <property type="entry name" value="NAD(P)H-quinone oxidoreductase subunit I, chloroplastic"/>
    <property type="match status" value="1"/>
</dbReference>
<dbReference type="Gene3D" id="3.30.70.3270">
    <property type="match status" value="1"/>
</dbReference>
<dbReference type="HAMAP" id="MF_01351">
    <property type="entry name" value="NDH1_NuoI"/>
    <property type="match status" value="1"/>
</dbReference>
<dbReference type="InterPro" id="IPR017896">
    <property type="entry name" value="4Fe4S_Fe-S-bd"/>
</dbReference>
<dbReference type="InterPro" id="IPR017900">
    <property type="entry name" value="4Fe4S_Fe_S_CS"/>
</dbReference>
<dbReference type="InterPro" id="IPR010226">
    <property type="entry name" value="NADH_quinone_OxRdtase_chainI"/>
</dbReference>
<dbReference type="InterPro" id="IPR004497">
    <property type="entry name" value="NDHI"/>
</dbReference>
<dbReference type="NCBIfam" id="TIGR00403">
    <property type="entry name" value="ndhI"/>
    <property type="match status" value="1"/>
</dbReference>
<dbReference type="NCBIfam" id="TIGR01971">
    <property type="entry name" value="NuoI"/>
    <property type="match status" value="1"/>
</dbReference>
<dbReference type="NCBIfam" id="NF004537">
    <property type="entry name" value="PRK05888.1-3"/>
    <property type="match status" value="1"/>
</dbReference>
<dbReference type="PANTHER" id="PTHR47275">
    <property type="entry name" value="NAD(P)H-QUINONE OXIDOREDUCTASE SUBUNIT I, CHLOROPLASTIC"/>
    <property type="match status" value="1"/>
</dbReference>
<dbReference type="PANTHER" id="PTHR47275:SF1">
    <property type="entry name" value="NAD(P)H-QUINONE OXIDOREDUCTASE SUBUNIT I, CHLOROPLASTIC"/>
    <property type="match status" value="1"/>
</dbReference>
<dbReference type="Pfam" id="PF00037">
    <property type="entry name" value="Fer4"/>
    <property type="match status" value="2"/>
</dbReference>
<dbReference type="SUPFAM" id="SSF54862">
    <property type="entry name" value="4Fe-4S ferredoxins"/>
    <property type="match status" value="1"/>
</dbReference>
<dbReference type="PROSITE" id="PS00198">
    <property type="entry name" value="4FE4S_FER_1"/>
    <property type="match status" value="2"/>
</dbReference>
<dbReference type="PROSITE" id="PS51379">
    <property type="entry name" value="4FE4S_FER_2"/>
    <property type="match status" value="2"/>
</dbReference>
<reference key="1">
    <citation type="submission" date="2003-01" db="EMBL/GenBank/DDBJ databases">
        <title>Chloroplast DNA phylogeny of tribe Heliantheae (Asteraceae).</title>
        <authorList>
            <person name="Panero J.L."/>
            <person name="Baldwin B.G."/>
            <person name="Schilling E.E."/>
            <person name="Clevinger J.A."/>
        </authorList>
    </citation>
    <scope>NUCLEOTIDE SEQUENCE [GENOMIC DNA]</scope>
</reference>
<accession>Q8HVP4</accession>